<gene>
    <name type="primary">ZNF33B</name>
    <name type="synonym">KOX2</name>
    <name type="synonym">ZNF11B</name>
</gene>
<feature type="chain" id="PRO_0000047334" description="Zinc finger protein 33B">
    <location>
        <begin position="1"/>
        <end position="778"/>
    </location>
</feature>
<feature type="domain" description="KRAB" evidence="3">
    <location>
        <begin position="12"/>
        <end position="83"/>
    </location>
</feature>
<feature type="zinc finger region" description="C2H2-type 1" evidence="2">
    <location>
        <begin position="329"/>
        <end position="351"/>
    </location>
</feature>
<feature type="zinc finger region" description="C2H2-type 2" evidence="2">
    <location>
        <begin position="357"/>
        <end position="379"/>
    </location>
</feature>
<feature type="zinc finger region" description="C2H2-type 3" evidence="2">
    <location>
        <begin position="385"/>
        <end position="407"/>
    </location>
</feature>
<feature type="zinc finger region" description="C2H2-type 4" evidence="2">
    <location>
        <begin position="413"/>
        <end position="435"/>
    </location>
</feature>
<feature type="zinc finger region" description="C2H2-type 5" evidence="2">
    <location>
        <begin position="441"/>
        <end position="463"/>
    </location>
</feature>
<feature type="zinc finger region" description="C2H2-type 6" evidence="2">
    <location>
        <begin position="469"/>
        <end position="491"/>
    </location>
</feature>
<feature type="zinc finger region" description="C2H2-type 7" evidence="2">
    <location>
        <begin position="497"/>
        <end position="519"/>
    </location>
</feature>
<feature type="zinc finger region" description="C2H2-type 8" evidence="2">
    <location>
        <begin position="525"/>
        <end position="547"/>
    </location>
</feature>
<feature type="zinc finger region" description="C2H2-type 9" evidence="2">
    <location>
        <begin position="553"/>
        <end position="575"/>
    </location>
</feature>
<feature type="zinc finger region" description="C2H2-type 10" evidence="2">
    <location>
        <begin position="581"/>
        <end position="603"/>
    </location>
</feature>
<feature type="zinc finger region" description="C2H2-type 11" evidence="2">
    <location>
        <begin position="609"/>
        <end position="631"/>
    </location>
</feature>
<feature type="zinc finger region" description="C2H2-type 12" evidence="2">
    <location>
        <begin position="637"/>
        <end position="659"/>
    </location>
</feature>
<feature type="zinc finger region" description="C2H2-type 13" evidence="2">
    <location>
        <begin position="665"/>
        <end position="687"/>
    </location>
</feature>
<feature type="zinc finger region" description="C2H2-type 14" evidence="2">
    <location>
        <begin position="693"/>
        <end position="715"/>
    </location>
</feature>
<feature type="zinc finger region" description="C2H2-type 15" evidence="2">
    <location>
        <begin position="721"/>
        <end position="743"/>
    </location>
</feature>
<feature type="zinc finger region" description="C2H2-type 16" evidence="2">
    <location>
        <begin position="749"/>
        <end position="771"/>
    </location>
</feature>
<feature type="cross-link" description="Glycyl lysine isopeptide (Lys-Gly) (interchain with G-Cter in SUMO2)" evidence="7">
    <location>
        <position position="181"/>
    </location>
</feature>
<feature type="cross-link" description="Glycyl lysine isopeptide (Lys-Gly) (interchain with G-Cter in SUMO2)" evidence="1">
    <location>
        <position position="238"/>
    </location>
</feature>
<feature type="cross-link" description="Glycyl lysine isopeptide (Lys-Gly) (interchain with G-Cter in SUMO2)" evidence="1">
    <location>
        <position position="313"/>
    </location>
</feature>
<feature type="cross-link" description="Glycyl lysine isopeptide (Lys-Gly) (interchain with G-Cter in SUMO2)" evidence="1">
    <location>
        <position position="677"/>
    </location>
</feature>
<feature type="cross-link" description="Glycyl lysine isopeptide (Lys-Gly) (interchain with G-Cter in SUMO2)" evidence="1">
    <location>
        <position position="733"/>
    </location>
</feature>
<feature type="sequence variant" id="VAR_024192" description="In dbSNP:rs210280." evidence="4 5">
    <original>R</original>
    <variation>C</variation>
    <location>
        <position position="145"/>
    </location>
</feature>
<feature type="sequence variant" id="VAR_052752" description="In dbSNP:rs7914982.">
    <original>H</original>
    <variation>R</variation>
    <location>
        <position position="356"/>
    </location>
</feature>
<feature type="sequence conflict" description="In Ref. 5; CAA36559." evidence="6" ref="5">
    <original>K</original>
    <variation>E</variation>
    <location>
        <position position="392"/>
    </location>
</feature>
<feature type="sequence conflict" description="In Ref. 5; CAA36559." evidence="6" ref="5">
    <original>K</original>
    <variation>E</variation>
    <location>
        <position position="420"/>
    </location>
</feature>
<name>ZN33B_HUMAN</name>
<proteinExistence type="evidence at protein level"/>
<dbReference type="EMBL" id="AJ491697">
    <property type="protein sequence ID" value="CAD36956.1"/>
    <property type="molecule type" value="mRNA"/>
</dbReference>
<dbReference type="EMBL" id="AL022345">
    <property type="status" value="NOT_ANNOTATED_CDS"/>
    <property type="molecule type" value="Genomic_DNA"/>
</dbReference>
<dbReference type="EMBL" id="BC048313">
    <property type="protein sequence ID" value="AAH48313.1"/>
    <property type="status" value="ALT_SEQ"/>
    <property type="molecule type" value="mRNA"/>
</dbReference>
<dbReference type="EMBL" id="X68684">
    <property type="protein sequence ID" value="CAA48643.1"/>
    <property type="molecule type" value="mRNA"/>
</dbReference>
<dbReference type="EMBL" id="X68685">
    <property type="protein sequence ID" value="CAA48644.1"/>
    <property type="molecule type" value="Genomic_DNA"/>
</dbReference>
<dbReference type="EMBL" id="X68688">
    <property type="protein sequence ID" value="CAA48647.1"/>
    <property type="molecule type" value="Genomic_DNA"/>
</dbReference>
<dbReference type="EMBL" id="X52333">
    <property type="protein sequence ID" value="CAA36559.1"/>
    <property type="molecule type" value="mRNA"/>
</dbReference>
<dbReference type="CCDS" id="CCDS7198.1"/>
<dbReference type="PIR" id="I37959">
    <property type="entry name" value="I37959"/>
</dbReference>
<dbReference type="PIR" id="S33989">
    <property type="entry name" value="S33994"/>
</dbReference>
<dbReference type="PIR" id="S33993">
    <property type="entry name" value="S33993"/>
</dbReference>
<dbReference type="RefSeq" id="NP_001291962.1">
    <property type="nucleotide sequence ID" value="NM_001305033.1"/>
</dbReference>
<dbReference type="RefSeq" id="NP_001291964.1">
    <property type="nucleotide sequence ID" value="NM_001305035.1"/>
</dbReference>
<dbReference type="RefSeq" id="NP_001291965.1">
    <property type="nucleotide sequence ID" value="NM_001305036.1"/>
</dbReference>
<dbReference type="RefSeq" id="NP_001291966.1">
    <property type="nucleotide sequence ID" value="NM_001305037.1"/>
</dbReference>
<dbReference type="RefSeq" id="NP_001291967.1">
    <property type="nucleotide sequence ID" value="NM_001305038.1"/>
</dbReference>
<dbReference type="RefSeq" id="NP_001291968.1">
    <property type="nucleotide sequence ID" value="NM_001305039.1"/>
</dbReference>
<dbReference type="RefSeq" id="NP_001291969.1">
    <property type="nucleotide sequence ID" value="NM_001305040.1"/>
</dbReference>
<dbReference type="RefSeq" id="NP_008886.1">
    <property type="nucleotide sequence ID" value="NM_006955.3"/>
</dbReference>
<dbReference type="SMR" id="Q06732"/>
<dbReference type="BioGRID" id="113411">
    <property type="interactions" value="6"/>
</dbReference>
<dbReference type="FunCoup" id="Q06732">
    <property type="interactions" value="88"/>
</dbReference>
<dbReference type="IntAct" id="Q06732">
    <property type="interactions" value="7"/>
</dbReference>
<dbReference type="STRING" id="9606.ENSP00000352444"/>
<dbReference type="iPTMnet" id="Q06732"/>
<dbReference type="PhosphoSitePlus" id="Q06732"/>
<dbReference type="BioMuta" id="ZNF33B"/>
<dbReference type="DMDM" id="66774229"/>
<dbReference type="jPOST" id="Q06732"/>
<dbReference type="MassIVE" id="Q06732"/>
<dbReference type="PaxDb" id="9606-ENSP00000352444"/>
<dbReference type="PeptideAtlas" id="Q06732"/>
<dbReference type="ProteomicsDB" id="58476"/>
<dbReference type="Pumba" id="Q06732"/>
<dbReference type="Antibodypedia" id="55057">
    <property type="antibodies" value="6 antibodies from 3 providers"/>
</dbReference>
<dbReference type="DNASU" id="7582"/>
<dbReference type="Ensembl" id="ENST00000359467.8">
    <property type="protein sequence ID" value="ENSP00000352444.2"/>
    <property type="gene ID" value="ENSG00000196693.15"/>
</dbReference>
<dbReference type="GeneID" id="7582"/>
<dbReference type="KEGG" id="hsa:7582"/>
<dbReference type="MANE-Select" id="ENST00000359467.8">
    <property type="protein sequence ID" value="ENSP00000352444.2"/>
    <property type="RefSeq nucleotide sequence ID" value="NM_006955.3"/>
    <property type="RefSeq protein sequence ID" value="NP_008886.1"/>
</dbReference>
<dbReference type="UCSC" id="uc001jaf.1">
    <property type="organism name" value="human"/>
</dbReference>
<dbReference type="AGR" id="HGNC:13097"/>
<dbReference type="CTD" id="7582"/>
<dbReference type="DisGeNET" id="7582"/>
<dbReference type="GeneCards" id="ZNF33B"/>
<dbReference type="HGNC" id="HGNC:13097">
    <property type="gene designation" value="ZNF33B"/>
</dbReference>
<dbReference type="HPA" id="ENSG00000196693">
    <property type="expression patterns" value="Low tissue specificity"/>
</dbReference>
<dbReference type="MIM" id="194522">
    <property type="type" value="gene"/>
</dbReference>
<dbReference type="neXtProt" id="NX_Q06732"/>
<dbReference type="OpenTargets" id="ENSG00000196693"/>
<dbReference type="PharmGKB" id="PA37672"/>
<dbReference type="VEuPathDB" id="HostDB:ENSG00000196693"/>
<dbReference type="eggNOG" id="KOG1721">
    <property type="taxonomic scope" value="Eukaryota"/>
</dbReference>
<dbReference type="GeneTree" id="ENSGT00940000162173"/>
<dbReference type="InParanoid" id="Q06732"/>
<dbReference type="OMA" id="NFEYNIC"/>
<dbReference type="OrthoDB" id="9411774at2759"/>
<dbReference type="PAN-GO" id="Q06732">
    <property type="GO annotations" value="4 GO annotations based on evolutionary models"/>
</dbReference>
<dbReference type="PhylomeDB" id="Q06732"/>
<dbReference type="TreeFam" id="TF337898"/>
<dbReference type="PathwayCommons" id="Q06732"/>
<dbReference type="Reactome" id="R-HSA-212436">
    <property type="pathway name" value="Generic Transcription Pathway"/>
</dbReference>
<dbReference type="SignaLink" id="Q06732"/>
<dbReference type="BioGRID-ORCS" id="7582">
    <property type="hits" value="29 hits in 997 CRISPR screens"/>
</dbReference>
<dbReference type="ChiTaRS" id="ZNF33B">
    <property type="organism name" value="human"/>
</dbReference>
<dbReference type="GeneWiki" id="ZNF33B"/>
<dbReference type="GenomeRNAi" id="7582"/>
<dbReference type="Pharos" id="Q06732">
    <property type="development level" value="Tdark"/>
</dbReference>
<dbReference type="PRO" id="PR:Q06732"/>
<dbReference type="Proteomes" id="UP000005640">
    <property type="component" value="Chromosome 10"/>
</dbReference>
<dbReference type="RNAct" id="Q06732">
    <property type="molecule type" value="protein"/>
</dbReference>
<dbReference type="Bgee" id="ENSG00000196693">
    <property type="expression patterns" value="Expressed in body of pancreas and 159 other cell types or tissues"/>
</dbReference>
<dbReference type="ExpressionAtlas" id="Q06732">
    <property type="expression patterns" value="baseline and differential"/>
</dbReference>
<dbReference type="GO" id="GO:0005634">
    <property type="term" value="C:nucleus"/>
    <property type="evidence" value="ECO:0000318"/>
    <property type="project" value="GO_Central"/>
</dbReference>
<dbReference type="GO" id="GO:0003677">
    <property type="term" value="F:DNA binding"/>
    <property type="evidence" value="ECO:0007669"/>
    <property type="project" value="UniProtKB-KW"/>
</dbReference>
<dbReference type="GO" id="GO:0008270">
    <property type="term" value="F:zinc ion binding"/>
    <property type="evidence" value="ECO:0007669"/>
    <property type="project" value="UniProtKB-KW"/>
</dbReference>
<dbReference type="GO" id="GO:0006357">
    <property type="term" value="P:regulation of transcription by RNA polymerase II"/>
    <property type="evidence" value="ECO:0000318"/>
    <property type="project" value="GO_Central"/>
</dbReference>
<dbReference type="CDD" id="cd07765">
    <property type="entry name" value="KRAB_A-box"/>
    <property type="match status" value="1"/>
</dbReference>
<dbReference type="FunFam" id="3.30.160.60:FF:000555">
    <property type="entry name" value="Zinc finger protein 1 homolog"/>
    <property type="match status" value="1"/>
</dbReference>
<dbReference type="FunFam" id="3.30.160.60:FF:000782">
    <property type="entry name" value="Zinc finger protein 33A"/>
    <property type="match status" value="1"/>
</dbReference>
<dbReference type="FunFam" id="3.30.160.60:FF:002343">
    <property type="entry name" value="Zinc finger protein 33A"/>
    <property type="match status" value="1"/>
</dbReference>
<dbReference type="FunFam" id="3.30.160.60:FF:000667">
    <property type="entry name" value="Zinc finger protein 33B"/>
    <property type="match status" value="2"/>
</dbReference>
<dbReference type="FunFam" id="3.30.160.60:FF:000699">
    <property type="entry name" value="Zinc finger protein 33B"/>
    <property type="match status" value="2"/>
</dbReference>
<dbReference type="FunFam" id="3.30.160.60:FF:001503">
    <property type="entry name" value="zinc finger protein 33B isoform X2"/>
    <property type="match status" value="3"/>
</dbReference>
<dbReference type="FunFam" id="3.30.160.60:FF:000016">
    <property type="entry name" value="zinc finger protein 37 homolog"/>
    <property type="match status" value="2"/>
</dbReference>
<dbReference type="FunFam" id="3.30.160.60:FF:002254">
    <property type="entry name" value="Zinc finger protein 540"/>
    <property type="match status" value="1"/>
</dbReference>
<dbReference type="FunFam" id="3.30.160.60:FF:000149">
    <property type="entry name" value="Zinc finger protein 569"/>
    <property type="match status" value="1"/>
</dbReference>
<dbReference type="FunFam" id="3.30.160.60:FF:000069">
    <property type="entry name" value="Zinc finger protein 572"/>
    <property type="match status" value="1"/>
</dbReference>
<dbReference type="FunFam" id="3.30.160.60:FF:001157">
    <property type="entry name" value="Zinc finger protein 793"/>
    <property type="match status" value="1"/>
</dbReference>
<dbReference type="Gene3D" id="6.10.140.140">
    <property type="match status" value="1"/>
</dbReference>
<dbReference type="Gene3D" id="3.30.160.60">
    <property type="entry name" value="Classic Zinc Finger"/>
    <property type="match status" value="16"/>
</dbReference>
<dbReference type="InterPro" id="IPR001909">
    <property type="entry name" value="KRAB"/>
</dbReference>
<dbReference type="InterPro" id="IPR036051">
    <property type="entry name" value="KRAB_dom_sf"/>
</dbReference>
<dbReference type="InterPro" id="IPR050826">
    <property type="entry name" value="Krueppel_C2H2_ZnFinger"/>
</dbReference>
<dbReference type="InterPro" id="IPR036236">
    <property type="entry name" value="Znf_C2H2_sf"/>
</dbReference>
<dbReference type="InterPro" id="IPR013087">
    <property type="entry name" value="Znf_C2H2_type"/>
</dbReference>
<dbReference type="PANTHER" id="PTHR24377">
    <property type="entry name" value="IP01015P-RELATED"/>
    <property type="match status" value="1"/>
</dbReference>
<dbReference type="Pfam" id="PF01352">
    <property type="entry name" value="KRAB"/>
    <property type="match status" value="1"/>
</dbReference>
<dbReference type="Pfam" id="PF00096">
    <property type="entry name" value="zf-C2H2"/>
    <property type="match status" value="16"/>
</dbReference>
<dbReference type="SMART" id="SM00349">
    <property type="entry name" value="KRAB"/>
    <property type="match status" value="1"/>
</dbReference>
<dbReference type="SMART" id="SM00355">
    <property type="entry name" value="ZnF_C2H2"/>
    <property type="match status" value="16"/>
</dbReference>
<dbReference type="SUPFAM" id="SSF57667">
    <property type="entry name" value="beta-beta-alpha zinc fingers"/>
    <property type="match status" value="10"/>
</dbReference>
<dbReference type="SUPFAM" id="SSF109640">
    <property type="entry name" value="KRAB domain (Kruppel-associated box)"/>
    <property type="match status" value="1"/>
</dbReference>
<dbReference type="PROSITE" id="PS50805">
    <property type="entry name" value="KRAB"/>
    <property type="match status" value="1"/>
</dbReference>
<dbReference type="PROSITE" id="PS00028">
    <property type="entry name" value="ZINC_FINGER_C2H2_1"/>
    <property type="match status" value="16"/>
</dbReference>
<dbReference type="PROSITE" id="PS50157">
    <property type="entry name" value="ZINC_FINGER_C2H2_2"/>
    <property type="match status" value="16"/>
</dbReference>
<accession>Q06732</accession>
<accession>Q06731</accession>
<accession>Q32MA2</accession>
<accession>Q86XY8</accession>
<accession>Q8NDW3</accession>
<comment type="function">
    <text>May be involved in transcriptional regulation.</text>
</comment>
<comment type="interaction">
    <interactant intactId="EBI-474142">
        <id>Q06732</id>
    </interactant>
    <interactant intactId="EBI-749530">
        <id>P43365</id>
        <label>MAGEA12</label>
    </interactant>
    <organismsDiffer>false</organismsDiffer>
    <experiments>3</experiments>
</comment>
<comment type="subcellular location">
    <subcellularLocation>
        <location evidence="6">Nucleus</location>
    </subcellularLocation>
</comment>
<comment type="similarity">
    <text evidence="6">Belongs to the krueppel C2H2-type zinc-finger protein family.</text>
</comment>
<comment type="sequence caution" evidence="6">
    <conflict type="miscellaneous discrepancy">
        <sequence resource="EMBL-CDS" id="AAH48313"/>
    </conflict>
    <text>Contaminating sequence. Potential poly-A sequence.</text>
</comment>
<evidence type="ECO:0000250" key="1">
    <source>
        <dbReference type="UniProtKB" id="Q06730"/>
    </source>
</evidence>
<evidence type="ECO:0000255" key="2">
    <source>
        <dbReference type="PROSITE-ProRule" id="PRU00042"/>
    </source>
</evidence>
<evidence type="ECO:0000255" key="3">
    <source>
        <dbReference type="PROSITE-ProRule" id="PRU00119"/>
    </source>
</evidence>
<evidence type="ECO:0000269" key="4">
    <source>
    </source>
</evidence>
<evidence type="ECO:0000269" key="5">
    <source>
    </source>
</evidence>
<evidence type="ECO:0000305" key="6"/>
<evidence type="ECO:0007744" key="7">
    <source>
    </source>
</evidence>
<sequence length="778" mass="90683">MNKVDQKFQGSVSFKDVTVGFTQEEWQHLDPSQRALYRDVMLENYSNLVSVGYCAHKPEVIFRLEQGEEPWRLEEEFPSQSFPEVWTADHLKERSQENQSKHLWEVVFINNEMLTKEQGNVIGIPFNMDVSSFPSRKMFCQYDSRGMSFNTVSELVISKINYLGKKSDEFNACGKLLLNIKHDETHTREKNEVLKNRNTLSHRENTLQHEKIQTLDHNFEYSICQETLLEKAVFNTRKRENAEENNCDYNEFGRTFCDSSSLLFHQIPPSKDSHYEFSDCEKFLCVKSTLSKHDGVPVKHYDCGESGNNFRRKLCLSQLQKGDKGEKHFECNECGKAFWEKSHLTRHQRVHTGEKHFQCNQCGKTFWEKSNLTKHQRSHTGEKPFECNECGKAFSHKSALTLHQRTHTGEKPYQCNACGKTFYQKSDLTKHQRTHTGQKPYECYECGKSFCMNSHLTVHQRTHTGEKPFECLECGKSFCQKSHLTQHQRTHIGDKPYECNACGKTFYHKSVLTRHQIIHTGLKPYECYECGKTFCLKSDLTIHQRTHTGEKPFACPECGKFFSHKSTLSQHYRTHTGEKPYECHECGKIFYNKSYLTKHNRTHTGEKPYECNECGKTFCQKSQLTQHQRIHIGEKPYECNECGKAFCHKSALIVHQRTHTQEKPYKCNECGKSFCVKSGLILHERKHTGEKPYECNECGKSFSHKSSLTVHHRAHTGEKSCQCNECGKIFYRKSDLAKHQRSHTGEKPYECNTCRKTFSQKSNLIVHQRTHIGEKPYE</sequence>
<keyword id="KW-0238">DNA-binding</keyword>
<keyword id="KW-1017">Isopeptide bond</keyword>
<keyword id="KW-0479">Metal-binding</keyword>
<keyword id="KW-0539">Nucleus</keyword>
<keyword id="KW-1267">Proteomics identification</keyword>
<keyword id="KW-1185">Reference proteome</keyword>
<keyword id="KW-0677">Repeat</keyword>
<keyword id="KW-0804">Transcription</keyword>
<keyword id="KW-0805">Transcription regulation</keyword>
<keyword id="KW-0832">Ubl conjugation</keyword>
<keyword id="KW-0862">Zinc</keyword>
<keyword id="KW-0863">Zinc-finger</keyword>
<organism>
    <name type="scientific">Homo sapiens</name>
    <name type="common">Human</name>
    <dbReference type="NCBI Taxonomy" id="9606"/>
    <lineage>
        <taxon>Eukaryota</taxon>
        <taxon>Metazoa</taxon>
        <taxon>Chordata</taxon>
        <taxon>Craniata</taxon>
        <taxon>Vertebrata</taxon>
        <taxon>Euteleostomi</taxon>
        <taxon>Mammalia</taxon>
        <taxon>Eutheria</taxon>
        <taxon>Euarchontoglires</taxon>
        <taxon>Primates</taxon>
        <taxon>Haplorrhini</taxon>
        <taxon>Catarrhini</taxon>
        <taxon>Hominidae</taxon>
        <taxon>Homo</taxon>
    </lineage>
</organism>
<protein>
    <recommendedName>
        <fullName>Zinc finger protein 33B</fullName>
    </recommendedName>
    <alternativeName>
        <fullName>Zinc finger protein 11B</fullName>
    </alternativeName>
    <alternativeName>
        <fullName>Zinc finger protein KOX2</fullName>
    </alternativeName>
</protein>
<reference key="1">
    <citation type="journal article" date="2003" name="Genome Res.">
        <title>Genomic sequence and transcriptional profile of the boundary between pericentromeric satellites and genes on human chromosome arm 10p.</title>
        <authorList>
            <person name="Guy J."/>
            <person name="Hearn T."/>
            <person name="Crosier M."/>
            <person name="Mudge J."/>
            <person name="Viggiano L."/>
            <person name="Koczan D."/>
            <person name="Thiesen H.-J."/>
            <person name="Bailey J.A."/>
            <person name="Horvath J.E."/>
            <person name="Eichler E.E."/>
            <person name="Earthrowl M.E."/>
            <person name="Deloukas P."/>
            <person name="French L."/>
            <person name="Rogers J."/>
            <person name="Bentley D."/>
            <person name="Jackson M.S."/>
        </authorList>
    </citation>
    <scope>NUCLEOTIDE SEQUENCE [GENOMIC DNA]</scope>
</reference>
<reference key="2">
    <citation type="journal article" date="2004" name="Nature">
        <title>The DNA sequence and comparative analysis of human chromosome 10.</title>
        <authorList>
            <person name="Deloukas P."/>
            <person name="Earthrowl M.E."/>
            <person name="Grafham D.V."/>
            <person name="Rubenfield M."/>
            <person name="French L."/>
            <person name="Steward C.A."/>
            <person name="Sims S.K."/>
            <person name="Jones M.C."/>
            <person name="Searle S."/>
            <person name="Scott C."/>
            <person name="Howe K."/>
            <person name="Hunt S.E."/>
            <person name="Andrews T.D."/>
            <person name="Gilbert J.G.R."/>
            <person name="Swarbreck D."/>
            <person name="Ashurst J.L."/>
            <person name="Taylor A."/>
            <person name="Battles J."/>
            <person name="Bird C.P."/>
            <person name="Ainscough R."/>
            <person name="Almeida J.P."/>
            <person name="Ashwell R.I.S."/>
            <person name="Ambrose K.D."/>
            <person name="Babbage A.K."/>
            <person name="Bagguley C.L."/>
            <person name="Bailey J."/>
            <person name="Banerjee R."/>
            <person name="Bates K."/>
            <person name="Beasley H."/>
            <person name="Bray-Allen S."/>
            <person name="Brown A.J."/>
            <person name="Brown J.Y."/>
            <person name="Burford D.C."/>
            <person name="Burrill W."/>
            <person name="Burton J."/>
            <person name="Cahill P."/>
            <person name="Camire D."/>
            <person name="Carter N.P."/>
            <person name="Chapman J.C."/>
            <person name="Clark S.Y."/>
            <person name="Clarke G."/>
            <person name="Clee C.M."/>
            <person name="Clegg S."/>
            <person name="Corby N."/>
            <person name="Coulson A."/>
            <person name="Dhami P."/>
            <person name="Dutta I."/>
            <person name="Dunn M."/>
            <person name="Faulkner L."/>
            <person name="Frankish A."/>
            <person name="Frankland J.A."/>
            <person name="Garner P."/>
            <person name="Garnett J."/>
            <person name="Gribble S."/>
            <person name="Griffiths C."/>
            <person name="Grocock R."/>
            <person name="Gustafson E."/>
            <person name="Hammond S."/>
            <person name="Harley J.L."/>
            <person name="Hart E."/>
            <person name="Heath P.D."/>
            <person name="Ho T.P."/>
            <person name="Hopkins B."/>
            <person name="Horne J."/>
            <person name="Howden P.J."/>
            <person name="Huckle E."/>
            <person name="Hynds C."/>
            <person name="Johnson C."/>
            <person name="Johnson D."/>
            <person name="Kana A."/>
            <person name="Kay M."/>
            <person name="Kimberley A.M."/>
            <person name="Kershaw J.K."/>
            <person name="Kokkinaki M."/>
            <person name="Laird G.K."/>
            <person name="Lawlor S."/>
            <person name="Lee H.M."/>
            <person name="Leongamornlert D.A."/>
            <person name="Laird G."/>
            <person name="Lloyd C."/>
            <person name="Lloyd D.M."/>
            <person name="Loveland J."/>
            <person name="Lovell J."/>
            <person name="McLaren S."/>
            <person name="McLay K.E."/>
            <person name="McMurray A."/>
            <person name="Mashreghi-Mohammadi M."/>
            <person name="Matthews L."/>
            <person name="Milne S."/>
            <person name="Nickerson T."/>
            <person name="Nguyen M."/>
            <person name="Overton-Larty E."/>
            <person name="Palmer S.A."/>
            <person name="Pearce A.V."/>
            <person name="Peck A.I."/>
            <person name="Pelan S."/>
            <person name="Phillimore B."/>
            <person name="Porter K."/>
            <person name="Rice C.M."/>
            <person name="Rogosin A."/>
            <person name="Ross M.T."/>
            <person name="Sarafidou T."/>
            <person name="Sehra H.K."/>
            <person name="Shownkeen R."/>
            <person name="Skuce C.D."/>
            <person name="Smith M."/>
            <person name="Standring L."/>
            <person name="Sycamore N."/>
            <person name="Tester J."/>
            <person name="Thorpe A."/>
            <person name="Torcasso W."/>
            <person name="Tracey A."/>
            <person name="Tromans A."/>
            <person name="Tsolas J."/>
            <person name="Wall M."/>
            <person name="Walsh J."/>
            <person name="Wang H."/>
            <person name="Weinstock K."/>
            <person name="West A.P."/>
            <person name="Willey D.L."/>
            <person name="Whitehead S.L."/>
            <person name="Wilming L."/>
            <person name="Wray P.W."/>
            <person name="Young L."/>
            <person name="Chen Y."/>
            <person name="Lovering R.C."/>
            <person name="Moschonas N.K."/>
            <person name="Siebert R."/>
            <person name="Fechtel K."/>
            <person name="Bentley D."/>
            <person name="Durbin R.M."/>
            <person name="Hubbard T."/>
            <person name="Doucette-Stamm L."/>
            <person name="Beck S."/>
            <person name="Smith D.R."/>
            <person name="Rogers J."/>
        </authorList>
    </citation>
    <scope>NUCLEOTIDE SEQUENCE [LARGE SCALE GENOMIC DNA]</scope>
</reference>
<reference key="3">
    <citation type="journal article" date="2004" name="Genome Res.">
        <title>The status, quality, and expansion of the NIH full-length cDNA project: the Mammalian Gene Collection (MGC).</title>
        <authorList>
            <consortium name="The MGC Project Team"/>
        </authorList>
    </citation>
    <scope>NUCLEOTIDE SEQUENCE [LARGE SCALE MRNA] OF 1-579</scope>
    <scope>VARIANT CYS-145</scope>
    <source>
        <tissue>Duodenum</tissue>
    </source>
</reference>
<reference key="4">
    <citation type="journal article" date="1993" name="Nucleic Acids Res.">
        <title>Duplicated KOX zinc finger gene clusters flank the centromere of human chromosome 10: evidence for a pericentric inversion during primate evolution.</title>
        <authorList>
            <person name="Tunnacliffe A."/>
            <person name="Liu L."/>
            <person name="Moore J.K."/>
            <person name="Leversha M.A."/>
            <person name="Jackson M.S."/>
            <person name="Ferguson-Smith M.A."/>
            <person name="Thiesen H.-J."/>
            <person name="Ponder B.A."/>
        </authorList>
    </citation>
    <scope>NUCLEOTIDE SEQUENCE [GENOMIC DNA / MRNA] OF 76-454 AND 745-778</scope>
    <scope>VARIANT CYS-145</scope>
</reference>
<reference key="5">
    <citation type="journal article" date="1990" name="New Biol.">
        <title>Multiple genes encoding zinc finger domains are expressed in human T cells.</title>
        <authorList>
            <person name="Thiesen H.-J."/>
        </authorList>
    </citation>
    <scope>NUCLEOTIDE SEQUENCE [MRNA] OF 385-440</scope>
    <source>
        <tissue>Lymphoid tissue</tissue>
    </source>
</reference>
<reference key="6">
    <citation type="journal article" date="2017" name="Nat. Struct. Mol. Biol.">
        <title>Site-specific mapping of the human SUMO proteome reveals co-modification with phosphorylation.</title>
        <authorList>
            <person name="Hendriks I.A."/>
            <person name="Lyon D."/>
            <person name="Young C."/>
            <person name="Jensen L.J."/>
            <person name="Vertegaal A.C."/>
            <person name="Nielsen M.L."/>
        </authorList>
    </citation>
    <scope>SUMOYLATION [LARGE SCALE ANALYSIS] AT LYS-181</scope>
    <scope>IDENTIFICATION BY MASS SPECTROMETRY [LARGE SCALE ANALYSIS]</scope>
</reference>